<evidence type="ECO:0000255" key="1">
    <source>
        <dbReference type="HAMAP-Rule" id="MF_01471"/>
    </source>
</evidence>
<name>CAS2_METAC</name>
<proteinExistence type="inferred from homology"/>
<comment type="function">
    <text evidence="1">CRISPR (clustered regularly interspaced short palindromic repeat), is an adaptive immune system that provides protection against mobile genetic elements (viruses, transposable elements and conjugative plasmids). CRISPR clusters contain sequences complementary to antecedent mobile elements and target invading nucleic acids. CRISPR clusters are transcribed and processed into CRISPR RNA (crRNA). Functions as a ssRNA-specific endoribonuclease. Involved in the integration of spacer DNA into the CRISPR cassette.</text>
</comment>
<comment type="cofactor">
    <cofactor evidence="1">
        <name>Mg(2+)</name>
        <dbReference type="ChEBI" id="CHEBI:18420"/>
    </cofactor>
</comment>
<comment type="subunit">
    <text evidence="1">Homodimer, forms a heterotetramer with a Cas1 homodimer.</text>
</comment>
<comment type="similarity">
    <text evidence="1">Belongs to the CRISPR-associated endoribonuclease Cas2 protein family.</text>
</comment>
<keyword id="KW-0051">Antiviral defense</keyword>
<keyword id="KW-0255">Endonuclease</keyword>
<keyword id="KW-0378">Hydrolase</keyword>
<keyword id="KW-0460">Magnesium</keyword>
<keyword id="KW-0479">Metal-binding</keyword>
<keyword id="KW-0540">Nuclease</keyword>
<keyword id="KW-1185">Reference proteome</keyword>
<sequence length="87" mass="10221">MYVVIVYDVGVERVNKVRSFLREYMNWVQNSVFEGELTKAEFLKIKSRLKELIQESSDHIIFYSSRDRKYLGIEDLGTPKADTSNII</sequence>
<dbReference type="EC" id="3.1.-.-" evidence="1"/>
<dbReference type="EMBL" id="AE010299">
    <property type="protein sequence ID" value="AAM07024.1"/>
    <property type="molecule type" value="Genomic_DNA"/>
</dbReference>
<dbReference type="RefSeq" id="WP_011023576.1">
    <property type="nucleotide sequence ID" value="NC_003552.1"/>
</dbReference>
<dbReference type="SMR" id="Q8TJV8"/>
<dbReference type="STRING" id="188937.MA_3669"/>
<dbReference type="EnsemblBacteria" id="AAM07024">
    <property type="protein sequence ID" value="AAM07024"/>
    <property type="gene ID" value="MA_3669"/>
</dbReference>
<dbReference type="GeneID" id="1475562"/>
<dbReference type="KEGG" id="mac:MA_3669"/>
<dbReference type="HOGENOM" id="CLU_161124_0_1_2"/>
<dbReference type="InParanoid" id="Q8TJV8"/>
<dbReference type="OrthoDB" id="43236at2157"/>
<dbReference type="PhylomeDB" id="Q8TJV8"/>
<dbReference type="Proteomes" id="UP000002487">
    <property type="component" value="Chromosome"/>
</dbReference>
<dbReference type="GO" id="GO:0046872">
    <property type="term" value="F:metal ion binding"/>
    <property type="evidence" value="ECO:0007669"/>
    <property type="project" value="UniProtKB-UniRule"/>
</dbReference>
<dbReference type="GO" id="GO:0004521">
    <property type="term" value="F:RNA endonuclease activity"/>
    <property type="evidence" value="ECO:0007669"/>
    <property type="project" value="InterPro"/>
</dbReference>
<dbReference type="GO" id="GO:0051607">
    <property type="term" value="P:defense response to virus"/>
    <property type="evidence" value="ECO:0007669"/>
    <property type="project" value="UniProtKB-UniRule"/>
</dbReference>
<dbReference type="GO" id="GO:0043571">
    <property type="term" value="P:maintenance of CRISPR repeat elements"/>
    <property type="evidence" value="ECO:0007669"/>
    <property type="project" value="UniProtKB-UniRule"/>
</dbReference>
<dbReference type="CDD" id="cd09725">
    <property type="entry name" value="Cas2_I_II_III"/>
    <property type="match status" value="1"/>
</dbReference>
<dbReference type="Gene3D" id="3.30.70.240">
    <property type="match status" value="1"/>
</dbReference>
<dbReference type="HAMAP" id="MF_01471">
    <property type="entry name" value="Cas2"/>
    <property type="match status" value="1"/>
</dbReference>
<dbReference type="InterPro" id="IPR021127">
    <property type="entry name" value="CRISPR_associated_Cas2"/>
</dbReference>
<dbReference type="InterPro" id="IPR019199">
    <property type="entry name" value="Virulence_VapD/CRISPR_Cas2"/>
</dbReference>
<dbReference type="NCBIfam" id="TIGR01573">
    <property type="entry name" value="cas2"/>
    <property type="match status" value="1"/>
</dbReference>
<dbReference type="PANTHER" id="PTHR34405">
    <property type="entry name" value="CRISPR-ASSOCIATED ENDORIBONUCLEASE CAS2"/>
    <property type="match status" value="1"/>
</dbReference>
<dbReference type="PANTHER" id="PTHR34405:SF1">
    <property type="entry name" value="CRISPR-ASSOCIATED ENDORIBONUCLEASE CAS2"/>
    <property type="match status" value="1"/>
</dbReference>
<dbReference type="Pfam" id="PF09827">
    <property type="entry name" value="CRISPR_Cas2"/>
    <property type="match status" value="1"/>
</dbReference>
<dbReference type="SUPFAM" id="SSF143430">
    <property type="entry name" value="TTP0101/SSO1404-like"/>
    <property type="match status" value="1"/>
</dbReference>
<feature type="chain" id="PRO_0000417745" description="CRISPR-associated endoribonuclease Cas2">
    <location>
        <begin position="1"/>
        <end position="87"/>
    </location>
</feature>
<feature type="binding site" evidence="1">
    <location>
        <position position="8"/>
    </location>
    <ligand>
        <name>Mg(2+)</name>
        <dbReference type="ChEBI" id="CHEBI:18420"/>
        <note>catalytic</note>
    </ligand>
</feature>
<reference key="1">
    <citation type="journal article" date="2002" name="Genome Res.">
        <title>The genome of Methanosarcina acetivorans reveals extensive metabolic and physiological diversity.</title>
        <authorList>
            <person name="Galagan J.E."/>
            <person name="Nusbaum C."/>
            <person name="Roy A."/>
            <person name="Endrizzi M.G."/>
            <person name="Macdonald P."/>
            <person name="FitzHugh W."/>
            <person name="Calvo S."/>
            <person name="Engels R."/>
            <person name="Smirnov S."/>
            <person name="Atnoor D."/>
            <person name="Brown A."/>
            <person name="Allen N."/>
            <person name="Naylor J."/>
            <person name="Stange-Thomann N."/>
            <person name="DeArellano K."/>
            <person name="Johnson R."/>
            <person name="Linton L."/>
            <person name="McEwan P."/>
            <person name="McKernan K."/>
            <person name="Talamas J."/>
            <person name="Tirrell A."/>
            <person name="Ye W."/>
            <person name="Zimmer A."/>
            <person name="Barber R.D."/>
            <person name="Cann I."/>
            <person name="Graham D.E."/>
            <person name="Grahame D.A."/>
            <person name="Guss A.M."/>
            <person name="Hedderich R."/>
            <person name="Ingram-Smith C."/>
            <person name="Kuettner H.C."/>
            <person name="Krzycki J.A."/>
            <person name="Leigh J.A."/>
            <person name="Li W."/>
            <person name="Liu J."/>
            <person name="Mukhopadhyay B."/>
            <person name="Reeve J.N."/>
            <person name="Smith K."/>
            <person name="Springer T.A."/>
            <person name="Umayam L.A."/>
            <person name="White O."/>
            <person name="White R.H."/>
            <person name="de Macario E.C."/>
            <person name="Ferry J.G."/>
            <person name="Jarrell K.F."/>
            <person name="Jing H."/>
            <person name="Macario A.J.L."/>
            <person name="Paulsen I.T."/>
            <person name="Pritchett M."/>
            <person name="Sowers K.R."/>
            <person name="Swanson R.V."/>
            <person name="Zinder S.H."/>
            <person name="Lander E."/>
            <person name="Metcalf W.W."/>
            <person name="Birren B."/>
        </authorList>
    </citation>
    <scope>NUCLEOTIDE SEQUENCE [LARGE SCALE GENOMIC DNA]</scope>
    <source>
        <strain>ATCC 35395 / DSM 2834 / JCM 12185 / C2A</strain>
    </source>
</reference>
<organism>
    <name type="scientific">Methanosarcina acetivorans (strain ATCC 35395 / DSM 2834 / JCM 12185 / C2A)</name>
    <dbReference type="NCBI Taxonomy" id="188937"/>
    <lineage>
        <taxon>Archaea</taxon>
        <taxon>Methanobacteriati</taxon>
        <taxon>Methanobacteriota</taxon>
        <taxon>Stenosarchaea group</taxon>
        <taxon>Methanomicrobia</taxon>
        <taxon>Methanosarcinales</taxon>
        <taxon>Methanosarcinaceae</taxon>
        <taxon>Methanosarcina</taxon>
    </lineage>
</organism>
<accession>Q8TJV8</accession>
<gene>
    <name evidence="1" type="primary">cas2</name>
    <name type="ordered locus">MA_3669</name>
</gene>
<protein>
    <recommendedName>
        <fullName evidence="1">CRISPR-associated endoribonuclease Cas2</fullName>
        <ecNumber evidence="1">3.1.-.-</ecNumber>
    </recommendedName>
</protein>